<feature type="transit peptide" description="Mitochondrion" evidence="2">
    <location>
        <begin position="1"/>
        <end position="37"/>
    </location>
</feature>
<feature type="chain" id="PRO_0000429500" description="Bifunctional D-cysteine desulfhydrase/1-aminocyclopropane-1-carboxylate deaminase, mitochondrial">
    <location>
        <begin position="38"/>
        <end position="401"/>
    </location>
</feature>
<feature type="active site" description="Nucleophile" evidence="1">
    <location>
        <position position="120"/>
    </location>
</feature>
<feature type="modified residue" description="N6-(pyridoxal phosphate)lysine" evidence="1">
    <location>
        <position position="93"/>
    </location>
</feature>
<feature type="splice variant" id="VSP_057958" description="In isoform 2.">
    <location>
        <begin position="1"/>
        <end position="19"/>
    </location>
</feature>
<feature type="initiator methionine" description="Removed" evidence="6">
    <location sequence="F4HYF3-2">
        <position position="1"/>
    </location>
</feature>
<feature type="modified residue" description="N-acetylserine" evidence="6">
    <location sequence="F4HYF3-2">
        <position position="2"/>
    </location>
</feature>
<comment type="function">
    <text>Catalyzes the production of hydrogen sulfide (H2S) from cysteine. Is mainly responsible for the degradation of cysteine to generate H2S, a regulator of stomatal movement and closure. Has high affinity for D-cysteine.</text>
</comment>
<comment type="function">
    <text>Possesses 1-aminocyclopropane-1-carboxylic acid (ACC) deaminase activity. Acts as a regulator of ACC levels and causes changes in ethylene levels.</text>
</comment>
<comment type="catalytic activity">
    <reaction evidence="3">
        <text>D-cysteine + H2O = hydrogen sulfide + pyruvate + NH4(+) + H(+)</text>
        <dbReference type="Rhea" id="RHEA:11268"/>
        <dbReference type="ChEBI" id="CHEBI:15361"/>
        <dbReference type="ChEBI" id="CHEBI:15377"/>
        <dbReference type="ChEBI" id="CHEBI:15378"/>
        <dbReference type="ChEBI" id="CHEBI:28938"/>
        <dbReference type="ChEBI" id="CHEBI:29919"/>
        <dbReference type="ChEBI" id="CHEBI:35236"/>
        <dbReference type="EC" id="4.4.1.15"/>
    </reaction>
</comment>
<comment type="catalytic activity">
    <reaction evidence="3">
        <text>1-aminocyclopropane-1-carboxylate + H2O = 2-oxobutanoate + NH4(+)</text>
        <dbReference type="Rhea" id="RHEA:16933"/>
        <dbReference type="ChEBI" id="CHEBI:15377"/>
        <dbReference type="ChEBI" id="CHEBI:16763"/>
        <dbReference type="ChEBI" id="CHEBI:28938"/>
        <dbReference type="ChEBI" id="CHEBI:58360"/>
        <dbReference type="EC" id="3.5.99.7"/>
    </reaction>
</comment>
<comment type="cofactor">
    <cofactor evidence="3">
        <name>pyridoxal 5'-phosphate</name>
        <dbReference type="ChEBI" id="CHEBI:597326"/>
    </cofactor>
</comment>
<comment type="biophysicochemical properties">
    <kinetics>
        <KM evidence="3">0.25 mM for D-cysteine</KM>
        <text>kcat is 6 sec(-1) for D-cysteine as substrate.</text>
    </kinetics>
    <phDependence>
        <text evidence="3">Optimum pH is 8.0.</text>
    </phDependence>
</comment>
<comment type="subcellular location">
    <subcellularLocation>
        <location evidence="3">Mitochondrion</location>
    </subcellularLocation>
</comment>
<comment type="alternative products">
    <event type="alternative initiation"/>
    <isoform>
        <id>F4HYF3-1</id>
        <name>1</name>
        <sequence type="displayed"/>
    </isoform>
    <isoform>
        <id>F4HYF3-2</id>
        <name>2</name>
        <sequence type="described" ref="VSP_057958"/>
    </isoform>
</comment>
<comment type="tissue specificity">
    <text evidence="4">Highly expressed in stems and cauline leaves, and at lower levels in roots, rosette leaves and flowers.</text>
</comment>
<comment type="induction">
    <text evidence="4">By drought.</text>
</comment>
<comment type="miscellaneous">
    <molecule>Isoform 2</molecule>
    <text evidence="5">Produced by alternative initiation at Met-20 of isoform 1.</text>
</comment>
<comment type="similarity">
    <text evidence="5">Belongs to the ACC deaminase/D-cysteine desulfhydrase family.</text>
</comment>
<comment type="sequence caution" evidence="5">
    <conflict type="erroneous gene model prediction">
        <sequence resource="EMBL-CDS" id="AAD49754"/>
    </conflict>
</comment>
<comment type="sequence caution" evidence="5">
    <conflict type="erroneous gene model prediction">
        <sequence resource="EMBL-CDS" id="AAF79717"/>
    </conflict>
</comment>
<comment type="sequence caution" evidence="5">
    <conflict type="erroneous initiation">
        <sequence resource="EMBL-CDS" id="AAL32737"/>
    </conflict>
    <text>Truncated N-terminus.</text>
</comment>
<organism>
    <name type="scientific">Arabidopsis thaliana</name>
    <name type="common">Mouse-ear cress</name>
    <dbReference type="NCBI Taxonomy" id="3702"/>
    <lineage>
        <taxon>Eukaryota</taxon>
        <taxon>Viridiplantae</taxon>
        <taxon>Streptophyta</taxon>
        <taxon>Embryophyta</taxon>
        <taxon>Tracheophyta</taxon>
        <taxon>Spermatophyta</taxon>
        <taxon>Magnoliopsida</taxon>
        <taxon>eudicotyledons</taxon>
        <taxon>Gunneridae</taxon>
        <taxon>Pentapetalae</taxon>
        <taxon>rosids</taxon>
        <taxon>malvids</taxon>
        <taxon>Brassicales</taxon>
        <taxon>Brassicaceae</taxon>
        <taxon>Camelineae</taxon>
        <taxon>Arabidopsis</taxon>
    </lineage>
</organism>
<dbReference type="EC" id="3.5.99.7"/>
<dbReference type="EC" id="4.4.1.15"/>
<dbReference type="EMBL" id="AC007932">
    <property type="protein sequence ID" value="AAD49754.2"/>
    <property type="status" value="ALT_SEQ"/>
    <property type="molecule type" value="Genomic_DNA"/>
</dbReference>
<dbReference type="EMBL" id="AC020889">
    <property type="protein sequence ID" value="AAF79717.1"/>
    <property type="status" value="ALT_SEQ"/>
    <property type="molecule type" value="Genomic_DNA"/>
</dbReference>
<dbReference type="EMBL" id="CP002684">
    <property type="protein sequence ID" value="AEE32290.1"/>
    <property type="molecule type" value="Genomic_DNA"/>
</dbReference>
<dbReference type="EMBL" id="CP002684">
    <property type="protein sequence ID" value="ANM58401.1"/>
    <property type="molecule type" value="Genomic_DNA"/>
</dbReference>
<dbReference type="EMBL" id="CP002684">
    <property type="protein sequence ID" value="ANM58402.1"/>
    <property type="molecule type" value="Genomic_DNA"/>
</dbReference>
<dbReference type="EMBL" id="AY062659">
    <property type="protein sequence ID" value="AAL32737.1"/>
    <property type="status" value="ALT_INIT"/>
    <property type="molecule type" value="mRNA"/>
</dbReference>
<dbReference type="EMBL" id="AY093325">
    <property type="protein sequence ID" value="AAM13324.1"/>
    <property type="molecule type" value="mRNA"/>
</dbReference>
<dbReference type="PIR" id="D96524">
    <property type="entry name" value="D96524"/>
</dbReference>
<dbReference type="RefSeq" id="NP_001319174.1">
    <molecule id="F4HYF3-1"/>
    <property type="nucleotide sequence ID" value="NM_001333334.1"/>
</dbReference>
<dbReference type="RefSeq" id="NP_001320840.1">
    <molecule id="F4HYF3-1"/>
    <property type="nucleotide sequence ID" value="NM_001333335.1"/>
</dbReference>
<dbReference type="RefSeq" id="NP_175275.3">
    <molecule id="F4HYF3-1"/>
    <property type="nucleotide sequence ID" value="NM_103738.7"/>
</dbReference>
<dbReference type="SMR" id="F4HYF3"/>
<dbReference type="BioGRID" id="26488">
    <property type="interactions" value="1"/>
</dbReference>
<dbReference type="FunCoup" id="F4HYF3">
    <property type="interactions" value="573"/>
</dbReference>
<dbReference type="STRING" id="3702.F4HYF3"/>
<dbReference type="iPTMnet" id="F4HYF3"/>
<dbReference type="PaxDb" id="3702-AT1G48420.1"/>
<dbReference type="ProteomicsDB" id="222747">
    <molecule id="F4HYF3-1"/>
</dbReference>
<dbReference type="EnsemblPlants" id="AT1G48420.1">
    <molecule id="F4HYF3-1"/>
    <property type="protein sequence ID" value="AT1G48420.1"/>
    <property type="gene ID" value="AT1G48420"/>
</dbReference>
<dbReference type="EnsemblPlants" id="AT1G48420.2">
    <molecule id="F4HYF3-1"/>
    <property type="protein sequence ID" value="AT1G48420.2"/>
    <property type="gene ID" value="AT1G48420"/>
</dbReference>
<dbReference type="EnsemblPlants" id="AT1G48420.3">
    <molecule id="F4HYF3-1"/>
    <property type="protein sequence ID" value="AT1G48420.3"/>
    <property type="gene ID" value="AT1G48420"/>
</dbReference>
<dbReference type="GeneID" id="841263"/>
<dbReference type="Gramene" id="AT1G48420.1">
    <molecule id="F4HYF3-1"/>
    <property type="protein sequence ID" value="AT1G48420.1"/>
    <property type="gene ID" value="AT1G48420"/>
</dbReference>
<dbReference type="Gramene" id="AT1G48420.2">
    <molecule id="F4HYF3-1"/>
    <property type="protein sequence ID" value="AT1G48420.2"/>
    <property type="gene ID" value="AT1G48420"/>
</dbReference>
<dbReference type="Gramene" id="AT1G48420.3">
    <molecule id="F4HYF3-1"/>
    <property type="protein sequence ID" value="AT1G48420.3"/>
    <property type="gene ID" value="AT1G48420"/>
</dbReference>
<dbReference type="KEGG" id="ath:AT1G48420"/>
<dbReference type="Araport" id="AT1G48420"/>
<dbReference type="TAIR" id="AT1G48420">
    <property type="gene designation" value="D-CDES"/>
</dbReference>
<dbReference type="eggNOG" id="ENOG502QPS1">
    <property type="taxonomic scope" value="Eukaryota"/>
</dbReference>
<dbReference type="HOGENOM" id="CLU_048897_1_1_1"/>
<dbReference type="InParanoid" id="F4HYF3"/>
<dbReference type="OMA" id="ERYHAGT"/>
<dbReference type="BRENDA" id="4.4.1.15">
    <property type="organism ID" value="399"/>
</dbReference>
<dbReference type="PRO" id="PR:F4HYF3"/>
<dbReference type="Proteomes" id="UP000006548">
    <property type="component" value="Chromosome 1"/>
</dbReference>
<dbReference type="ExpressionAtlas" id="F4HYF3">
    <property type="expression patterns" value="baseline and differential"/>
</dbReference>
<dbReference type="GO" id="GO:0009507">
    <property type="term" value="C:chloroplast"/>
    <property type="evidence" value="ECO:0007005"/>
    <property type="project" value="TAIR"/>
</dbReference>
<dbReference type="GO" id="GO:0005829">
    <property type="term" value="C:cytosol"/>
    <property type="evidence" value="ECO:0007005"/>
    <property type="project" value="TAIR"/>
</dbReference>
<dbReference type="GO" id="GO:0005739">
    <property type="term" value="C:mitochondrion"/>
    <property type="evidence" value="ECO:0000314"/>
    <property type="project" value="TAIR"/>
</dbReference>
<dbReference type="GO" id="GO:0005634">
    <property type="term" value="C:nucleus"/>
    <property type="evidence" value="ECO:0007005"/>
    <property type="project" value="TAIR"/>
</dbReference>
<dbReference type="GO" id="GO:0050897">
    <property type="term" value="F:cobalt ion binding"/>
    <property type="evidence" value="ECO:0007005"/>
    <property type="project" value="TAIR"/>
</dbReference>
<dbReference type="GO" id="GO:0019148">
    <property type="term" value="F:D-cysteine desulfhydrase activity"/>
    <property type="evidence" value="ECO:0000314"/>
    <property type="project" value="TAIR"/>
</dbReference>
<dbReference type="GO" id="GO:0016787">
    <property type="term" value="F:hydrolase activity"/>
    <property type="evidence" value="ECO:0007669"/>
    <property type="project" value="UniProtKB-KW"/>
</dbReference>
<dbReference type="GO" id="GO:0019447">
    <property type="term" value="P:D-cysteine catabolic process"/>
    <property type="evidence" value="ECO:0000314"/>
    <property type="project" value="TAIR"/>
</dbReference>
<dbReference type="GO" id="GO:0009693">
    <property type="term" value="P:ethylene biosynthetic process"/>
    <property type="evidence" value="ECO:0000315"/>
    <property type="project" value="TAIR"/>
</dbReference>
<dbReference type="GO" id="GO:1990170">
    <property type="term" value="P:stress response to cadmium ion"/>
    <property type="evidence" value="ECO:0000315"/>
    <property type="project" value="TAIR"/>
</dbReference>
<dbReference type="FunFam" id="3.40.50.1100:FF:000042">
    <property type="entry name" value="Bifunctional D-cysteine desulfhydrase/1-aminocyclopropane-1-carboxylate deaminase mitochondrial"/>
    <property type="match status" value="1"/>
</dbReference>
<dbReference type="FunFam" id="3.40.50.1100:FF:000037">
    <property type="entry name" value="Bifunctional D-cysteine desulfhydrase/1-aminocyclopropane-1-carboxylate deaminase, mitochondrial"/>
    <property type="match status" value="1"/>
</dbReference>
<dbReference type="Gene3D" id="3.40.50.1100">
    <property type="match status" value="2"/>
</dbReference>
<dbReference type="InterPro" id="IPR027278">
    <property type="entry name" value="ACCD_DCysDesulf"/>
</dbReference>
<dbReference type="InterPro" id="IPR005966">
    <property type="entry name" value="D-Cys_desShydrase"/>
</dbReference>
<dbReference type="InterPro" id="IPR001926">
    <property type="entry name" value="TrpB-like_PALP"/>
</dbReference>
<dbReference type="InterPro" id="IPR036052">
    <property type="entry name" value="TrpB-like_PALP_sf"/>
</dbReference>
<dbReference type="NCBIfam" id="TIGR01275">
    <property type="entry name" value="ACC_deam_rel"/>
    <property type="match status" value="1"/>
</dbReference>
<dbReference type="PANTHER" id="PTHR43780">
    <property type="entry name" value="1-AMINOCYCLOPROPANE-1-CARBOXYLATE DEAMINASE-RELATED"/>
    <property type="match status" value="1"/>
</dbReference>
<dbReference type="PANTHER" id="PTHR43780:SF2">
    <property type="entry name" value="1-AMINOCYCLOPROPANE-1-CARBOXYLATE DEAMINASE-RELATED"/>
    <property type="match status" value="1"/>
</dbReference>
<dbReference type="Pfam" id="PF00291">
    <property type="entry name" value="PALP"/>
    <property type="match status" value="1"/>
</dbReference>
<dbReference type="PIRSF" id="PIRSF006278">
    <property type="entry name" value="ACCD_DCysDesulf"/>
    <property type="match status" value="1"/>
</dbReference>
<dbReference type="SUPFAM" id="SSF53686">
    <property type="entry name" value="Tryptophan synthase beta subunit-like PLP-dependent enzymes"/>
    <property type="match status" value="1"/>
</dbReference>
<protein>
    <recommendedName>
        <fullName>Bifunctional D-cysteine desulfhydrase/1-aminocyclopropane-1-carboxylate deaminase, mitochondrial</fullName>
        <ecNumber>3.5.99.7</ecNumber>
        <ecNumber>4.4.1.15</ecNumber>
    </recommendedName>
    <alternativeName>
        <fullName>1-aminocyclopropane-1-carboxylic acid deaminase 1</fullName>
        <shortName>AtACD1</shortName>
    </alternativeName>
    <alternativeName>
        <fullName>AtD-CDes1</fullName>
        <shortName>D-CDes1</shortName>
    </alternativeName>
    <alternativeName>
        <fullName>D-CDES</fullName>
    </alternativeName>
</protein>
<sequence>MRGRSLTLSRVKLELARRSMSATSVPSMADFLTKKPYSPPSWASHLRPLPSHTFSLAHLPTPIHRWNLPGLPNGTELWIKRDDFTGMELSGNKVRKLEFLMAEAVDQHADTVITIGGIQSNHCRATATASNYLNLNSHLILRTSKLLADEDPGLVGNLLVERLVGANVHLISKEEYSSIGSEALTNALKEKLEKEGKKPYVIPVGGSNSLGTWGYIEAAREIEEQLNYRPDDLKFDDIVVACGSGGTIAGISLGSWLGALKAKVHAFSVCDDPDYFYDFVQGLLDGLHAGVNSRDIVNIHNAKGKGYAMNTSEELEFVKKVASSTGVILDPVYSGKAAYGLINEITKDPKCWEGRKILFIHTGGLLGLYDKVDQMASLMGNWSRMDVSESVPRKDGVGKMF</sequence>
<reference key="1">
    <citation type="journal article" date="2000" name="Nature">
        <title>Sequence and analysis of chromosome 1 of the plant Arabidopsis thaliana.</title>
        <authorList>
            <person name="Theologis A."/>
            <person name="Ecker J.R."/>
            <person name="Palm C.J."/>
            <person name="Federspiel N.A."/>
            <person name="Kaul S."/>
            <person name="White O."/>
            <person name="Alonso J."/>
            <person name="Altafi H."/>
            <person name="Araujo R."/>
            <person name="Bowman C.L."/>
            <person name="Brooks S.Y."/>
            <person name="Buehler E."/>
            <person name="Chan A."/>
            <person name="Chao Q."/>
            <person name="Chen H."/>
            <person name="Cheuk R.F."/>
            <person name="Chin C.W."/>
            <person name="Chung M.K."/>
            <person name="Conn L."/>
            <person name="Conway A.B."/>
            <person name="Conway A.R."/>
            <person name="Creasy T.H."/>
            <person name="Dewar K."/>
            <person name="Dunn P."/>
            <person name="Etgu P."/>
            <person name="Feldblyum T.V."/>
            <person name="Feng J.-D."/>
            <person name="Fong B."/>
            <person name="Fujii C.Y."/>
            <person name="Gill J.E."/>
            <person name="Goldsmith A.D."/>
            <person name="Haas B."/>
            <person name="Hansen N.F."/>
            <person name="Hughes B."/>
            <person name="Huizar L."/>
            <person name="Hunter J.L."/>
            <person name="Jenkins J."/>
            <person name="Johnson-Hopson C."/>
            <person name="Khan S."/>
            <person name="Khaykin E."/>
            <person name="Kim C.J."/>
            <person name="Koo H.L."/>
            <person name="Kremenetskaia I."/>
            <person name="Kurtz D.B."/>
            <person name="Kwan A."/>
            <person name="Lam B."/>
            <person name="Langin-Hooper S."/>
            <person name="Lee A."/>
            <person name="Lee J.M."/>
            <person name="Lenz C.A."/>
            <person name="Li J.H."/>
            <person name="Li Y.-P."/>
            <person name="Lin X."/>
            <person name="Liu S.X."/>
            <person name="Liu Z.A."/>
            <person name="Luros J.S."/>
            <person name="Maiti R."/>
            <person name="Marziali A."/>
            <person name="Militscher J."/>
            <person name="Miranda M."/>
            <person name="Nguyen M."/>
            <person name="Nierman W.C."/>
            <person name="Osborne B.I."/>
            <person name="Pai G."/>
            <person name="Peterson J."/>
            <person name="Pham P.K."/>
            <person name="Rizzo M."/>
            <person name="Rooney T."/>
            <person name="Rowley D."/>
            <person name="Sakano H."/>
            <person name="Salzberg S.L."/>
            <person name="Schwartz J.R."/>
            <person name="Shinn P."/>
            <person name="Southwick A.M."/>
            <person name="Sun H."/>
            <person name="Tallon L.J."/>
            <person name="Tambunga G."/>
            <person name="Toriumi M.J."/>
            <person name="Town C.D."/>
            <person name="Utterback T."/>
            <person name="Van Aken S."/>
            <person name="Vaysberg M."/>
            <person name="Vysotskaia V.S."/>
            <person name="Walker M."/>
            <person name="Wu D."/>
            <person name="Yu G."/>
            <person name="Fraser C.M."/>
            <person name="Venter J.C."/>
            <person name="Davis R.W."/>
        </authorList>
    </citation>
    <scope>NUCLEOTIDE SEQUENCE [LARGE SCALE GENOMIC DNA]</scope>
    <source>
        <strain>cv. Columbia</strain>
    </source>
</reference>
<reference key="2">
    <citation type="journal article" date="2017" name="Plant J.">
        <title>Araport11: a complete reannotation of the Arabidopsis thaliana reference genome.</title>
        <authorList>
            <person name="Cheng C.Y."/>
            <person name="Krishnakumar V."/>
            <person name="Chan A.P."/>
            <person name="Thibaud-Nissen F."/>
            <person name="Schobel S."/>
            <person name="Town C.D."/>
        </authorList>
    </citation>
    <scope>GENOME REANNOTATION</scope>
    <source>
        <strain>cv. Columbia</strain>
    </source>
</reference>
<reference key="3">
    <citation type="journal article" date="2003" name="Science">
        <title>Empirical analysis of transcriptional activity in the Arabidopsis genome.</title>
        <authorList>
            <person name="Yamada K."/>
            <person name="Lim J."/>
            <person name="Dale J.M."/>
            <person name="Chen H."/>
            <person name="Shinn P."/>
            <person name="Palm C.J."/>
            <person name="Southwick A.M."/>
            <person name="Wu H.C."/>
            <person name="Kim C.J."/>
            <person name="Nguyen M."/>
            <person name="Pham P.K."/>
            <person name="Cheuk R.F."/>
            <person name="Karlin-Newmann G."/>
            <person name="Liu S.X."/>
            <person name="Lam B."/>
            <person name="Sakano H."/>
            <person name="Wu T."/>
            <person name="Yu G."/>
            <person name="Miranda M."/>
            <person name="Quach H.L."/>
            <person name="Tripp M."/>
            <person name="Chang C.H."/>
            <person name="Lee J.M."/>
            <person name="Toriumi M.J."/>
            <person name="Chan M.M."/>
            <person name="Tang C.C."/>
            <person name="Onodera C.S."/>
            <person name="Deng J.M."/>
            <person name="Akiyama K."/>
            <person name="Ansari Y."/>
            <person name="Arakawa T."/>
            <person name="Banh J."/>
            <person name="Banno F."/>
            <person name="Bowser L."/>
            <person name="Brooks S.Y."/>
            <person name="Carninci P."/>
            <person name="Chao Q."/>
            <person name="Choy N."/>
            <person name="Enju A."/>
            <person name="Goldsmith A.D."/>
            <person name="Gurjal M."/>
            <person name="Hansen N.F."/>
            <person name="Hayashizaki Y."/>
            <person name="Johnson-Hopson C."/>
            <person name="Hsuan V.W."/>
            <person name="Iida K."/>
            <person name="Karnes M."/>
            <person name="Khan S."/>
            <person name="Koesema E."/>
            <person name="Ishida J."/>
            <person name="Jiang P.X."/>
            <person name="Jones T."/>
            <person name="Kawai J."/>
            <person name="Kamiya A."/>
            <person name="Meyers C."/>
            <person name="Nakajima M."/>
            <person name="Narusaka M."/>
            <person name="Seki M."/>
            <person name="Sakurai T."/>
            <person name="Satou M."/>
            <person name="Tamse R."/>
            <person name="Vaysberg M."/>
            <person name="Wallender E.K."/>
            <person name="Wong C."/>
            <person name="Yamamura Y."/>
            <person name="Yuan S."/>
            <person name="Shinozaki K."/>
            <person name="Davis R.W."/>
            <person name="Theologis A."/>
            <person name="Ecker J.R."/>
        </authorList>
    </citation>
    <scope>NUCLEOTIDE SEQUENCE [LARGE SCALE MRNA] OF 2-401 AND 19-401</scope>
    <source>
        <strain>cv. Columbia</strain>
    </source>
</reference>
<reference key="4">
    <citation type="journal article" date="2005" name="FEBS J.">
        <title>Isolation and characterization of a D-cysteine desulfhydrase protein from Arabidopsis thaliana.</title>
        <authorList>
            <person name="Riemenschneider A."/>
            <person name="Wegele R."/>
            <person name="Schmidt A."/>
            <person name="Papenbrock J."/>
        </authorList>
    </citation>
    <scope>FUNCTION</scope>
    <scope>CATALYTIC ACTIVITY</scope>
    <scope>COFACTOR</scope>
    <scope>BIOPHYSICOCHEMICAL PROPERTIES</scope>
    <scope>SUBCELLULAR LOCATION</scope>
</reference>
<reference key="5">
    <citation type="journal article" date="2009" name="Physiol. Plantarum">
        <title>Ethylene levels are regulated by a plant encoded 1-aminocyclopropane-1-carboxylic acid deaminase.</title>
        <authorList>
            <person name="McDonnell L."/>
            <person name="Plett J.M."/>
            <person name="Andersson-Gunneras S."/>
            <person name="Kozela C."/>
            <person name="Dugardeyn J."/>
            <person name="Van Der Straeten D."/>
            <person name="Glick B.R."/>
            <person name="Sundberg B."/>
            <person name="Regan S."/>
        </authorList>
    </citation>
    <scope>FUNCTION</scope>
</reference>
<reference key="6">
    <citation type="journal article" date="2011" name="Biochem. Biophys. Res. Commun.">
        <title>Hydrogen sulfide improves drought resistance in Arabidopsis thaliana.</title>
        <authorList>
            <person name="Jin Z."/>
            <person name="Shen J."/>
            <person name="Qiao Z."/>
            <person name="Yang G."/>
            <person name="Wang R."/>
            <person name="Pei Y."/>
        </authorList>
    </citation>
    <scope>FUNCTION</scope>
    <scope>TISSUE SPECIFICITY</scope>
    <scope>INDUCTION BY DROUGHT</scope>
</reference>
<reference key="7">
    <citation type="journal article" date="2012" name="Mol. Cell. Proteomics">
        <title>Comparative large-scale characterisation of plant vs. mammal proteins reveals similar and idiosyncratic N-alpha acetylation features.</title>
        <authorList>
            <person name="Bienvenut W.V."/>
            <person name="Sumpton D."/>
            <person name="Martinez A."/>
            <person name="Lilla S."/>
            <person name="Espagne C."/>
            <person name="Meinnel T."/>
            <person name="Giglione C."/>
        </authorList>
    </citation>
    <scope>ACETYLATION [LARGE SCALE ANALYSIS] AT SER-2 (ISOFORM 2)</scope>
    <scope>CLEAVAGE OF INITIATOR METHIONINE [LARGE SCALE ANALYSIS] (ISOFORM 2)</scope>
    <scope>IDENTIFICATION BY MASS SPECTROMETRY [LARGE SCALE ANALYSIS]</scope>
</reference>
<name>DCYD1_ARATH</name>
<evidence type="ECO:0000250" key="1"/>
<evidence type="ECO:0000255" key="2"/>
<evidence type="ECO:0000269" key="3">
    <source>
    </source>
</evidence>
<evidence type="ECO:0000269" key="4">
    <source>
    </source>
</evidence>
<evidence type="ECO:0000305" key="5"/>
<evidence type="ECO:0007744" key="6">
    <source>
    </source>
</evidence>
<keyword id="KW-0007">Acetylation</keyword>
<keyword id="KW-0024">Alternative initiation</keyword>
<keyword id="KW-0378">Hydrolase</keyword>
<keyword id="KW-0456">Lyase</keyword>
<keyword id="KW-0496">Mitochondrion</keyword>
<keyword id="KW-0663">Pyridoxal phosphate</keyword>
<keyword id="KW-1185">Reference proteome</keyword>
<keyword id="KW-0346">Stress response</keyword>
<keyword id="KW-0809">Transit peptide</keyword>
<proteinExistence type="evidence at protein level"/>
<gene>
    <name type="primary">DCD</name>
    <name type="synonym">ACD1</name>
    <name type="ordered locus">At1g48420</name>
    <name type="ORF">F11A17.2</name>
    <name type="ORF">T1N15.3</name>
</gene>
<accession>F4HYF3</accession>
<accession>Q8W4C7</accession>
<accession>Q9SX74</accession>